<sequence length="125" mass="14477">MARLAGVDLPREKRMEIALTYIYGIGRTRSKEILRATDISFDVRPKDLDDDQLAKLREALENYRLEGDLRREVQADIRRKIEIGCYQGLRHRRHLPVHGQRTKTNARTRKGPKKTVAGKKKAGKK</sequence>
<name>RS13_SACEN</name>
<accession>A4FPJ5</accession>
<organism>
    <name type="scientific">Saccharopolyspora erythraea (strain ATCC 11635 / DSM 40517 / JCM 4748 / NBRC 13426 / NCIMB 8594 / NRRL 2338)</name>
    <dbReference type="NCBI Taxonomy" id="405948"/>
    <lineage>
        <taxon>Bacteria</taxon>
        <taxon>Bacillati</taxon>
        <taxon>Actinomycetota</taxon>
        <taxon>Actinomycetes</taxon>
        <taxon>Pseudonocardiales</taxon>
        <taxon>Pseudonocardiaceae</taxon>
        <taxon>Saccharopolyspora</taxon>
    </lineage>
</organism>
<evidence type="ECO:0000255" key="1">
    <source>
        <dbReference type="HAMAP-Rule" id="MF_01315"/>
    </source>
</evidence>
<evidence type="ECO:0000256" key="2">
    <source>
        <dbReference type="SAM" id="MobiDB-lite"/>
    </source>
</evidence>
<evidence type="ECO:0000305" key="3"/>
<dbReference type="EMBL" id="AM420293">
    <property type="protein sequence ID" value="CAM05970.1"/>
    <property type="molecule type" value="Genomic_DNA"/>
</dbReference>
<dbReference type="RefSeq" id="WP_009948667.1">
    <property type="nucleotide sequence ID" value="NC_009142.1"/>
</dbReference>
<dbReference type="SMR" id="A4FPJ5"/>
<dbReference type="STRING" id="405948.SACE_6806"/>
<dbReference type="KEGG" id="sen:SACE_6806"/>
<dbReference type="eggNOG" id="COG0099">
    <property type="taxonomic scope" value="Bacteria"/>
</dbReference>
<dbReference type="HOGENOM" id="CLU_103849_1_2_11"/>
<dbReference type="OrthoDB" id="9803610at2"/>
<dbReference type="Proteomes" id="UP000006728">
    <property type="component" value="Chromosome"/>
</dbReference>
<dbReference type="GO" id="GO:0005829">
    <property type="term" value="C:cytosol"/>
    <property type="evidence" value="ECO:0007669"/>
    <property type="project" value="TreeGrafter"/>
</dbReference>
<dbReference type="GO" id="GO:0015935">
    <property type="term" value="C:small ribosomal subunit"/>
    <property type="evidence" value="ECO:0007669"/>
    <property type="project" value="TreeGrafter"/>
</dbReference>
<dbReference type="GO" id="GO:0019843">
    <property type="term" value="F:rRNA binding"/>
    <property type="evidence" value="ECO:0007669"/>
    <property type="project" value="UniProtKB-UniRule"/>
</dbReference>
<dbReference type="GO" id="GO:0003735">
    <property type="term" value="F:structural constituent of ribosome"/>
    <property type="evidence" value="ECO:0007669"/>
    <property type="project" value="InterPro"/>
</dbReference>
<dbReference type="GO" id="GO:0000049">
    <property type="term" value="F:tRNA binding"/>
    <property type="evidence" value="ECO:0007669"/>
    <property type="project" value="UniProtKB-UniRule"/>
</dbReference>
<dbReference type="GO" id="GO:0006412">
    <property type="term" value="P:translation"/>
    <property type="evidence" value="ECO:0007669"/>
    <property type="project" value="UniProtKB-UniRule"/>
</dbReference>
<dbReference type="FunFam" id="1.10.8.50:FF:000001">
    <property type="entry name" value="30S ribosomal protein S13"/>
    <property type="match status" value="1"/>
</dbReference>
<dbReference type="FunFam" id="4.10.910.10:FF:000001">
    <property type="entry name" value="30S ribosomal protein S13"/>
    <property type="match status" value="1"/>
</dbReference>
<dbReference type="Gene3D" id="1.10.8.50">
    <property type="match status" value="1"/>
</dbReference>
<dbReference type="Gene3D" id="4.10.910.10">
    <property type="entry name" value="30s ribosomal protein s13, domain 2"/>
    <property type="match status" value="1"/>
</dbReference>
<dbReference type="HAMAP" id="MF_01315">
    <property type="entry name" value="Ribosomal_uS13"/>
    <property type="match status" value="1"/>
</dbReference>
<dbReference type="InterPro" id="IPR027437">
    <property type="entry name" value="Rbsml_uS13_C"/>
</dbReference>
<dbReference type="InterPro" id="IPR001892">
    <property type="entry name" value="Ribosomal_uS13"/>
</dbReference>
<dbReference type="InterPro" id="IPR010979">
    <property type="entry name" value="Ribosomal_uS13-like_H2TH"/>
</dbReference>
<dbReference type="InterPro" id="IPR019980">
    <property type="entry name" value="Ribosomal_uS13_bac-type"/>
</dbReference>
<dbReference type="InterPro" id="IPR018269">
    <property type="entry name" value="Ribosomal_uS13_CS"/>
</dbReference>
<dbReference type="NCBIfam" id="TIGR03631">
    <property type="entry name" value="uS13_bact"/>
    <property type="match status" value="1"/>
</dbReference>
<dbReference type="PANTHER" id="PTHR10871">
    <property type="entry name" value="30S RIBOSOMAL PROTEIN S13/40S RIBOSOMAL PROTEIN S18"/>
    <property type="match status" value="1"/>
</dbReference>
<dbReference type="PANTHER" id="PTHR10871:SF1">
    <property type="entry name" value="SMALL RIBOSOMAL SUBUNIT PROTEIN US13M"/>
    <property type="match status" value="1"/>
</dbReference>
<dbReference type="Pfam" id="PF00416">
    <property type="entry name" value="Ribosomal_S13"/>
    <property type="match status" value="1"/>
</dbReference>
<dbReference type="PIRSF" id="PIRSF002134">
    <property type="entry name" value="Ribosomal_S13"/>
    <property type="match status" value="1"/>
</dbReference>
<dbReference type="SUPFAM" id="SSF46946">
    <property type="entry name" value="S13-like H2TH domain"/>
    <property type="match status" value="1"/>
</dbReference>
<dbReference type="PROSITE" id="PS00646">
    <property type="entry name" value="RIBOSOMAL_S13_1"/>
    <property type="match status" value="1"/>
</dbReference>
<dbReference type="PROSITE" id="PS50159">
    <property type="entry name" value="RIBOSOMAL_S13_2"/>
    <property type="match status" value="1"/>
</dbReference>
<gene>
    <name evidence="1" type="primary">rpsM</name>
    <name type="ordered locus">SACE_6806</name>
</gene>
<feature type="chain" id="PRO_0000306700" description="Small ribosomal subunit protein uS13">
    <location>
        <begin position="1"/>
        <end position="125"/>
    </location>
</feature>
<feature type="region of interest" description="Disordered" evidence="2">
    <location>
        <begin position="92"/>
        <end position="125"/>
    </location>
</feature>
<comment type="function">
    <text evidence="1">Located at the top of the head of the 30S subunit, it contacts several helices of the 16S rRNA. In the 70S ribosome it contacts the 23S rRNA (bridge B1a) and protein L5 of the 50S subunit (bridge B1b), connecting the 2 subunits; these bridges are implicated in subunit movement. Contacts the tRNAs in the A and P-sites.</text>
</comment>
<comment type="subunit">
    <text evidence="1">Part of the 30S ribosomal subunit. Forms a loose heterodimer with protein S19. Forms two bridges to the 50S subunit in the 70S ribosome.</text>
</comment>
<comment type="similarity">
    <text evidence="1">Belongs to the universal ribosomal protein uS13 family.</text>
</comment>
<reference key="1">
    <citation type="journal article" date="2007" name="Nat. Biotechnol.">
        <title>Complete genome sequence of the erythromycin-producing bacterium Saccharopolyspora erythraea NRRL23338.</title>
        <authorList>
            <person name="Oliynyk M."/>
            <person name="Samborskyy M."/>
            <person name="Lester J.B."/>
            <person name="Mironenko T."/>
            <person name="Scott N."/>
            <person name="Dickens S."/>
            <person name="Haydock S.F."/>
            <person name="Leadlay P.F."/>
        </authorList>
    </citation>
    <scope>NUCLEOTIDE SEQUENCE [LARGE SCALE GENOMIC DNA]</scope>
    <source>
        <strain>ATCC 11635 / DSM 40517 / JCM 4748 / NBRC 13426 / NCIMB 8594 / NRRL 2338</strain>
    </source>
</reference>
<protein>
    <recommendedName>
        <fullName evidence="1">Small ribosomal subunit protein uS13</fullName>
    </recommendedName>
    <alternativeName>
        <fullName evidence="3">30S ribosomal protein S13</fullName>
    </alternativeName>
</protein>
<keyword id="KW-1185">Reference proteome</keyword>
<keyword id="KW-0687">Ribonucleoprotein</keyword>
<keyword id="KW-0689">Ribosomal protein</keyword>
<keyword id="KW-0694">RNA-binding</keyword>
<keyword id="KW-0699">rRNA-binding</keyword>
<keyword id="KW-0820">tRNA-binding</keyword>
<proteinExistence type="inferred from homology"/>